<name>LGT_POLNS</name>
<accession>B1XVJ0</accession>
<protein>
    <recommendedName>
        <fullName evidence="1">Phosphatidylglycerol--prolipoprotein diacylglyceryl transferase</fullName>
        <ecNumber evidence="1">2.5.1.145</ecNumber>
    </recommendedName>
</protein>
<keyword id="KW-0997">Cell inner membrane</keyword>
<keyword id="KW-1003">Cell membrane</keyword>
<keyword id="KW-0472">Membrane</keyword>
<keyword id="KW-0808">Transferase</keyword>
<keyword id="KW-0812">Transmembrane</keyword>
<keyword id="KW-1133">Transmembrane helix</keyword>
<dbReference type="EC" id="2.5.1.145" evidence="1"/>
<dbReference type="EMBL" id="CP001010">
    <property type="protein sequence ID" value="ACB44367.1"/>
    <property type="molecule type" value="Genomic_DNA"/>
</dbReference>
<dbReference type="SMR" id="B1XVJ0"/>
<dbReference type="STRING" id="452638.Pnec_1231"/>
<dbReference type="KEGG" id="pne:Pnec_1231"/>
<dbReference type="eggNOG" id="COG0682">
    <property type="taxonomic scope" value="Bacteria"/>
</dbReference>
<dbReference type="HOGENOM" id="CLU_013386_1_0_4"/>
<dbReference type="OrthoDB" id="871140at2"/>
<dbReference type="UniPathway" id="UPA00664"/>
<dbReference type="GO" id="GO:0005886">
    <property type="term" value="C:plasma membrane"/>
    <property type="evidence" value="ECO:0007669"/>
    <property type="project" value="UniProtKB-SubCell"/>
</dbReference>
<dbReference type="GO" id="GO:0008961">
    <property type="term" value="F:phosphatidylglycerol-prolipoprotein diacylglyceryl transferase activity"/>
    <property type="evidence" value="ECO:0007669"/>
    <property type="project" value="UniProtKB-UniRule"/>
</dbReference>
<dbReference type="GO" id="GO:0042158">
    <property type="term" value="P:lipoprotein biosynthetic process"/>
    <property type="evidence" value="ECO:0007669"/>
    <property type="project" value="UniProtKB-UniRule"/>
</dbReference>
<dbReference type="HAMAP" id="MF_01147">
    <property type="entry name" value="Lgt"/>
    <property type="match status" value="1"/>
</dbReference>
<dbReference type="InterPro" id="IPR001640">
    <property type="entry name" value="Lgt"/>
</dbReference>
<dbReference type="NCBIfam" id="TIGR00544">
    <property type="entry name" value="lgt"/>
    <property type="match status" value="1"/>
</dbReference>
<dbReference type="PANTHER" id="PTHR30589:SF0">
    <property type="entry name" value="PHOSPHATIDYLGLYCEROL--PROLIPOPROTEIN DIACYLGLYCERYL TRANSFERASE"/>
    <property type="match status" value="1"/>
</dbReference>
<dbReference type="PANTHER" id="PTHR30589">
    <property type="entry name" value="PROLIPOPROTEIN DIACYLGLYCERYL TRANSFERASE"/>
    <property type="match status" value="1"/>
</dbReference>
<dbReference type="Pfam" id="PF01790">
    <property type="entry name" value="LGT"/>
    <property type="match status" value="1"/>
</dbReference>
<dbReference type="PROSITE" id="PS01311">
    <property type="entry name" value="LGT"/>
    <property type="match status" value="1"/>
</dbReference>
<gene>
    <name evidence="1" type="primary">lgt</name>
    <name type="ordered locus">Pnec_1231</name>
</gene>
<evidence type="ECO:0000255" key="1">
    <source>
        <dbReference type="HAMAP-Rule" id="MF_01147"/>
    </source>
</evidence>
<organism>
    <name type="scientific">Polynucleobacter necessarius subsp. necessarius (strain STIR1)</name>
    <dbReference type="NCBI Taxonomy" id="452638"/>
    <lineage>
        <taxon>Bacteria</taxon>
        <taxon>Pseudomonadati</taxon>
        <taxon>Pseudomonadota</taxon>
        <taxon>Betaproteobacteria</taxon>
        <taxon>Burkholderiales</taxon>
        <taxon>Burkholderiaceae</taxon>
        <taxon>Polynucleobacter</taxon>
    </lineage>
</organism>
<reference key="1">
    <citation type="journal article" date="2013" name="Proc. Natl. Acad. Sci. U.S.A.">
        <title>Polynucleobacter necessarius, a model for genome reduction in both free-living and symbiotic bacteria.</title>
        <authorList>
            <person name="Boscaro V."/>
            <person name="Felletti M."/>
            <person name="Vannini C."/>
            <person name="Ackerman M.S."/>
            <person name="Chain P.S."/>
            <person name="Malfatti S."/>
            <person name="Vergez L.M."/>
            <person name="Shin M."/>
            <person name="Doak T.G."/>
            <person name="Lynch M."/>
            <person name="Petroni G."/>
        </authorList>
    </citation>
    <scope>NUCLEOTIDE SEQUENCE [LARGE SCALE GENOMIC DNA]</scope>
    <source>
        <strain>STIR1</strain>
    </source>
</reference>
<feature type="chain" id="PRO_1000137441" description="Phosphatidylglycerol--prolipoprotein diacylglyceryl transferase">
    <location>
        <begin position="1"/>
        <end position="262"/>
    </location>
</feature>
<feature type="transmembrane region" description="Helical" evidence="1">
    <location>
        <begin position="17"/>
        <end position="37"/>
    </location>
</feature>
<feature type="transmembrane region" description="Helical" evidence="1">
    <location>
        <begin position="59"/>
        <end position="79"/>
    </location>
</feature>
<feature type="transmembrane region" description="Helical" evidence="1">
    <location>
        <begin position="94"/>
        <end position="114"/>
    </location>
</feature>
<feature type="transmembrane region" description="Helical" evidence="1">
    <location>
        <begin position="121"/>
        <end position="141"/>
    </location>
</feature>
<feature type="transmembrane region" description="Helical" evidence="1">
    <location>
        <begin position="176"/>
        <end position="196"/>
    </location>
</feature>
<feature type="transmembrane region" description="Helical" evidence="1">
    <location>
        <begin position="201"/>
        <end position="221"/>
    </location>
</feature>
<feature type="transmembrane region" description="Helical" evidence="1">
    <location>
        <begin position="231"/>
        <end position="251"/>
    </location>
</feature>
<feature type="binding site" evidence="1">
    <location>
        <position position="142"/>
    </location>
    <ligand>
        <name>a 1,2-diacyl-sn-glycero-3-phospho-(1'-sn-glycerol)</name>
        <dbReference type="ChEBI" id="CHEBI:64716"/>
    </ligand>
</feature>
<sequence>MLIHPQFDPAAIRIGSFAIHWYGLMYLMAFVQFLLLGRLRIRAPRYQALGWTYKYLEDLLFAGVLGVVLGGRLGYTLFYMPGFYLANPLGIFKIWEGGMSFHGGLLGVLAALYWFAKKRKTTFFVVSDLVAPLVPFGLAFGRLGNFINGELWGRPTDLPWAMAFPLVDSVPRHPSQIYQLLGEGVLLGIALWFYAGKSRRVGQVSGFFLLGYGICRFLAEYAREPDAFLGLLGLGLSMGQWLCVPMIFFGIYLMTTFKSKSK</sequence>
<proteinExistence type="inferred from homology"/>
<comment type="function">
    <text evidence="1">Catalyzes the transfer of the diacylglyceryl group from phosphatidylglycerol to the sulfhydryl group of the N-terminal cysteine of a prolipoprotein, the first step in the formation of mature lipoproteins.</text>
</comment>
<comment type="catalytic activity">
    <reaction evidence="1">
        <text>L-cysteinyl-[prolipoprotein] + a 1,2-diacyl-sn-glycero-3-phospho-(1'-sn-glycerol) = an S-1,2-diacyl-sn-glyceryl-L-cysteinyl-[prolipoprotein] + sn-glycerol 1-phosphate + H(+)</text>
        <dbReference type="Rhea" id="RHEA:56712"/>
        <dbReference type="Rhea" id="RHEA-COMP:14679"/>
        <dbReference type="Rhea" id="RHEA-COMP:14680"/>
        <dbReference type="ChEBI" id="CHEBI:15378"/>
        <dbReference type="ChEBI" id="CHEBI:29950"/>
        <dbReference type="ChEBI" id="CHEBI:57685"/>
        <dbReference type="ChEBI" id="CHEBI:64716"/>
        <dbReference type="ChEBI" id="CHEBI:140658"/>
        <dbReference type="EC" id="2.5.1.145"/>
    </reaction>
</comment>
<comment type="pathway">
    <text evidence="1">Protein modification; lipoprotein biosynthesis (diacylglyceryl transfer).</text>
</comment>
<comment type="subcellular location">
    <subcellularLocation>
        <location evidence="1">Cell inner membrane</location>
        <topology evidence="1">Multi-pass membrane protein</topology>
    </subcellularLocation>
</comment>
<comment type="similarity">
    <text evidence="1">Belongs to the Lgt family.</text>
</comment>